<organism>
    <name type="scientific">Arabidopsis thaliana</name>
    <name type="common">Mouse-ear cress</name>
    <dbReference type="NCBI Taxonomy" id="3702"/>
    <lineage>
        <taxon>Eukaryota</taxon>
        <taxon>Viridiplantae</taxon>
        <taxon>Streptophyta</taxon>
        <taxon>Embryophyta</taxon>
        <taxon>Tracheophyta</taxon>
        <taxon>Spermatophyta</taxon>
        <taxon>Magnoliopsida</taxon>
        <taxon>eudicotyledons</taxon>
        <taxon>Gunneridae</taxon>
        <taxon>Pentapetalae</taxon>
        <taxon>rosids</taxon>
        <taxon>malvids</taxon>
        <taxon>Brassicales</taxon>
        <taxon>Brassicaceae</taxon>
        <taxon>Camelineae</taxon>
        <taxon>Arabidopsis</taxon>
    </lineage>
</organism>
<comment type="similarity">
    <text evidence="5">Belongs to the glycosyl hydrolase 1 family.</text>
</comment>
<comment type="caution">
    <text evidence="5">Lacks the conserved Glu residue involved in nucleophilic attack and essential for hydrolase activity. Its enzyme activity is therefore unsure.</text>
</comment>
<reference key="1">
    <citation type="submission" date="1998-07" db="EMBL/GenBank/DDBJ databases">
        <title>Beta-glucosidase homolog.</title>
        <authorList>
            <person name="Gualberto J.M."/>
            <person name="Schell J."/>
            <person name="Palme K."/>
        </authorList>
    </citation>
    <scope>NUCLEOTIDE SEQUENCE [GENOMIC DNA / MRNA]</scope>
</reference>
<reference key="2">
    <citation type="journal article" date="2000" name="Nature">
        <title>Sequence and analysis of chromosome 3 of the plant Arabidopsis thaliana.</title>
        <authorList>
            <person name="Salanoubat M."/>
            <person name="Lemcke K."/>
            <person name="Rieger M."/>
            <person name="Ansorge W."/>
            <person name="Unseld M."/>
            <person name="Fartmann B."/>
            <person name="Valle G."/>
            <person name="Bloecker H."/>
            <person name="Perez-Alonso M."/>
            <person name="Obermaier B."/>
            <person name="Delseny M."/>
            <person name="Boutry M."/>
            <person name="Grivell L.A."/>
            <person name="Mache R."/>
            <person name="Puigdomenech P."/>
            <person name="De Simone V."/>
            <person name="Choisne N."/>
            <person name="Artiguenave F."/>
            <person name="Robert C."/>
            <person name="Brottier P."/>
            <person name="Wincker P."/>
            <person name="Cattolico L."/>
            <person name="Weissenbach J."/>
            <person name="Saurin W."/>
            <person name="Quetier F."/>
            <person name="Schaefer M."/>
            <person name="Mueller-Auer S."/>
            <person name="Gabel C."/>
            <person name="Fuchs M."/>
            <person name="Benes V."/>
            <person name="Wurmbach E."/>
            <person name="Drzonek H."/>
            <person name="Erfle H."/>
            <person name="Jordan N."/>
            <person name="Bangert S."/>
            <person name="Wiedelmann R."/>
            <person name="Kranz H."/>
            <person name="Voss H."/>
            <person name="Holland R."/>
            <person name="Brandt P."/>
            <person name="Nyakatura G."/>
            <person name="Vezzi A."/>
            <person name="D'Angelo M."/>
            <person name="Pallavicini A."/>
            <person name="Toppo S."/>
            <person name="Simionati B."/>
            <person name="Conrad A."/>
            <person name="Hornischer K."/>
            <person name="Kauer G."/>
            <person name="Loehnert T.-H."/>
            <person name="Nordsiek G."/>
            <person name="Reichelt J."/>
            <person name="Scharfe M."/>
            <person name="Schoen O."/>
            <person name="Bargues M."/>
            <person name="Terol J."/>
            <person name="Climent J."/>
            <person name="Navarro P."/>
            <person name="Collado C."/>
            <person name="Perez-Perez A."/>
            <person name="Ottenwaelder B."/>
            <person name="Duchemin D."/>
            <person name="Cooke R."/>
            <person name="Laudie M."/>
            <person name="Berger-Llauro C."/>
            <person name="Purnelle B."/>
            <person name="Masuy D."/>
            <person name="de Haan M."/>
            <person name="Maarse A.C."/>
            <person name="Alcaraz J.-P."/>
            <person name="Cottet A."/>
            <person name="Casacuberta E."/>
            <person name="Monfort A."/>
            <person name="Argiriou A."/>
            <person name="Flores M."/>
            <person name="Liguori R."/>
            <person name="Vitale D."/>
            <person name="Mannhaupt G."/>
            <person name="Haase D."/>
            <person name="Schoof H."/>
            <person name="Rudd S."/>
            <person name="Zaccaria P."/>
            <person name="Mewes H.-W."/>
            <person name="Mayer K.F.X."/>
            <person name="Kaul S."/>
            <person name="Town C.D."/>
            <person name="Koo H.L."/>
            <person name="Tallon L.J."/>
            <person name="Jenkins J."/>
            <person name="Rooney T."/>
            <person name="Rizzo M."/>
            <person name="Walts A."/>
            <person name="Utterback T."/>
            <person name="Fujii C.Y."/>
            <person name="Shea T.P."/>
            <person name="Creasy T.H."/>
            <person name="Haas B."/>
            <person name="Maiti R."/>
            <person name="Wu D."/>
            <person name="Peterson J."/>
            <person name="Van Aken S."/>
            <person name="Pai G."/>
            <person name="Militscher J."/>
            <person name="Sellers P."/>
            <person name="Gill J.E."/>
            <person name="Feldblyum T.V."/>
            <person name="Preuss D."/>
            <person name="Lin X."/>
            <person name="Nierman W.C."/>
            <person name="Salzberg S.L."/>
            <person name="White O."/>
            <person name="Venter J.C."/>
            <person name="Fraser C.M."/>
            <person name="Kaneko T."/>
            <person name="Nakamura Y."/>
            <person name="Sato S."/>
            <person name="Kato T."/>
            <person name="Asamizu E."/>
            <person name="Sasamoto S."/>
            <person name="Kimura T."/>
            <person name="Idesawa K."/>
            <person name="Kawashima K."/>
            <person name="Kishida Y."/>
            <person name="Kiyokawa C."/>
            <person name="Kohara M."/>
            <person name="Matsumoto M."/>
            <person name="Matsuno A."/>
            <person name="Muraki A."/>
            <person name="Nakayama S."/>
            <person name="Nakazaki N."/>
            <person name="Shinpo S."/>
            <person name="Takeuchi C."/>
            <person name="Wada T."/>
            <person name="Watanabe A."/>
            <person name="Yamada M."/>
            <person name="Yasuda M."/>
            <person name="Tabata S."/>
        </authorList>
    </citation>
    <scope>NUCLEOTIDE SEQUENCE [LARGE SCALE GENOMIC DNA]</scope>
    <source>
        <strain>cv. Columbia</strain>
    </source>
</reference>
<reference key="3">
    <citation type="journal article" date="2017" name="Plant J.">
        <title>Araport11: a complete reannotation of the Arabidopsis thaliana reference genome.</title>
        <authorList>
            <person name="Cheng C.Y."/>
            <person name="Krishnakumar V."/>
            <person name="Chan A.P."/>
            <person name="Thibaud-Nissen F."/>
            <person name="Schobel S."/>
            <person name="Town C.D."/>
        </authorList>
    </citation>
    <scope>GENOME REANNOTATION</scope>
    <source>
        <strain>cv. Columbia</strain>
    </source>
</reference>
<reference key="4">
    <citation type="journal article" date="2004" name="Plant Mol. Biol.">
        <title>Functional genomic analysis of Arabidopsis thaliana glycoside hydrolase family 1.</title>
        <authorList>
            <person name="Xu Z."/>
            <person name="Escamilla-Trevino L.L."/>
            <person name="Zeng L."/>
            <person name="Lalgondar M."/>
            <person name="Bevan D.R."/>
            <person name="Winkel B.S.J."/>
            <person name="Mohamed A."/>
            <person name="Cheng C.-L."/>
            <person name="Shih M.-C."/>
            <person name="Poulton J.E."/>
            <person name="Esen A."/>
        </authorList>
    </citation>
    <scope>GENE FAMILY</scope>
    <scope>NOMENCLATURE</scope>
</reference>
<keyword id="KW-1015">Disulfide bond</keyword>
<keyword id="KW-0378">Hydrolase</keyword>
<keyword id="KW-1185">Reference proteome</keyword>
<keyword id="KW-0732">Signal</keyword>
<feature type="signal peptide" evidence="3">
    <location>
        <begin position="1"/>
        <end position="24"/>
    </location>
</feature>
<feature type="chain" id="PRO_0000389587" description="Probable inactive beta-glucosidase 25">
    <location>
        <begin position="25"/>
        <end position="531"/>
    </location>
</feature>
<feature type="active site" description="Proton donor" evidence="1">
    <location>
        <position position="203"/>
    </location>
</feature>
<feature type="binding site" evidence="1">
    <location>
        <position position="53"/>
    </location>
    <ligand>
        <name>a beta-D-glucoside</name>
        <dbReference type="ChEBI" id="CHEBI:22798"/>
    </ligand>
</feature>
<feature type="binding site" evidence="1">
    <location>
        <begin position="202"/>
        <end position="203"/>
    </location>
    <ligand>
        <name>a beta-D-glucoside</name>
        <dbReference type="ChEBI" id="CHEBI:22798"/>
    </ligand>
</feature>
<feature type="binding site" evidence="2">
    <location>
        <position position="348"/>
    </location>
    <ligand>
        <name>a beta-D-glucoside</name>
        <dbReference type="ChEBI" id="CHEBI:22798"/>
    </ligand>
</feature>
<feature type="binding site" evidence="1">
    <location>
        <begin position="477"/>
        <end position="478"/>
    </location>
    <ligand>
        <name>a beta-D-glucoside</name>
        <dbReference type="ChEBI" id="CHEBI:22798"/>
    </ligand>
</feature>
<feature type="disulfide bond" evidence="1">
    <location>
        <begin position="222"/>
        <end position="230"/>
    </location>
</feature>
<proteinExistence type="evidence at transcript level"/>
<dbReference type="EMBL" id="AF082157">
    <property type="protein sequence ID" value="AAC31962.1"/>
    <property type="molecule type" value="mRNA"/>
</dbReference>
<dbReference type="EMBL" id="AF082158">
    <property type="protein sequence ID" value="AAC32194.1"/>
    <property type="molecule type" value="Genomic_DNA"/>
</dbReference>
<dbReference type="EMBL" id="AC009327">
    <property type="protein sequence ID" value="AAF03468.1"/>
    <property type="molecule type" value="Genomic_DNA"/>
</dbReference>
<dbReference type="EMBL" id="CP002686">
    <property type="protein sequence ID" value="AEE73966.1"/>
    <property type="molecule type" value="Genomic_DNA"/>
</dbReference>
<dbReference type="PIR" id="T51956">
    <property type="entry name" value="T51956"/>
</dbReference>
<dbReference type="RefSeq" id="NP_187014.1">
    <property type="nucleotide sequence ID" value="NM_111235.4"/>
</dbReference>
<dbReference type="SMR" id="O82772"/>
<dbReference type="FunCoup" id="O82772">
    <property type="interactions" value="210"/>
</dbReference>
<dbReference type="STRING" id="3702.O82772"/>
<dbReference type="CAZy" id="GH1">
    <property type="family name" value="Glycoside Hydrolase Family 1"/>
</dbReference>
<dbReference type="PaxDb" id="3702-AT3G03640.1"/>
<dbReference type="ProteomicsDB" id="240660"/>
<dbReference type="EnsemblPlants" id="AT3G03640.1">
    <property type="protein sequence ID" value="AT3G03640.1"/>
    <property type="gene ID" value="AT3G03640"/>
</dbReference>
<dbReference type="GeneID" id="821201"/>
<dbReference type="Gramene" id="AT3G03640.1">
    <property type="protein sequence ID" value="AT3G03640.1"/>
    <property type="gene ID" value="AT3G03640"/>
</dbReference>
<dbReference type="KEGG" id="ath:AT3G03640"/>
<dbReference type="Araport" id="AT3G03640"/>
<dbReference type="TAIR" id="AT3G03640">
    <property type="gene designation" value="BGLU25"/>
</dbReference>
<dbReference type="eggNOG" id="KOG0626">
    <property type="taxonomic scope" value="Eukaryota"/>
</dbReference>
<dbReference type="HOGENOM" id="CLU_001859_1_0_1"/>
<dbReference type="InParanoid" id="O82772"/>
<dbReference type="OMA" id="THQHSEN"/>
<dbReference type="OrthoDB" id="65569at2759"/>
<dbReference type="PhylomeDB" id="O82772"/>
<dbReference type="BioCyc" id="ARA:AT3G03640-MONOMER"/>
<dbReference type="PRO" id="PR:O82772"/>
<dbReference type="Proteomes" id="UP000006548">
    <property type="component" value="Chromosome 3"/>
</dbReference>
<dbReference type="ExpressionAtlas" id="O82772">
    <property type="expression patterns" value="baseline and differential"/>
</dbReference>
<dbReference type="GO" id="GO:0005783">
    <property type="term" value="C:endoplasmic reticulum"/>
    <property type="evidence" value="ECO:0007005"/>
    <property type="project" value="TAIR"/>
</dbReference>
<dbReference type="GO" id="GO:0004553">
    <property type="term" value="F:hydrolase activity, hydrolyzing O-glycosyl compounds"/>
    <property type="evidence" value="ECO:0007669"/>
    <property type="project" value="InterPro"/>
</dbReference>
<dbReference type="GO" id="GO:0005975">
    <property type="term" value="P:carbohydrate metabolic process"/>
    <property type="evidence" value="ECO:0007669"/>
    <property type="project" value="InterPro"/>
</dbReference>
<dbReference type="FunFam" id="3.20.20.80:FF:000022">
    <property type="entry name" value="Beta-glucosidase 11"/>
    <property type="match status" value="1"/>
</dbReference>
<dbReference type="Gene3D" id="3.20.20.80">
    <property type="entry name" value="Glycosidases"/>
    <property type="match status" value="1"/>
</dbReference>
<dbReference type="InterPro" id="IPR001360">
    <property type="entry name" value="Glyco_hydro_1"/>
</dbReference>
<dbReference type="InterPro" id="IPR033132">
    <property type="entry name" value="Glyco_hydro_1_N_CS"/>
</dbReference>
<dbReference type="InterPro" id="IPR017853">
    <property type="entry name" value="Glycoside_hydrolase_SF"/>
</dbReference>
<dbReference type="PANTHER" id="PTHR10353">
    <property type="entry name" value="GLYCOSYL HYDROLASE"/>
    <property type="match status" value="1"/>
</dbReference>
<dbReference type="PANTHER" id="PTHR10353:SF178">
    <property type="entry name" value="INACTIVE BETA-GLUCOSIDASE 25-RELATED"/>
    <property type="match status" value="1"/>
</dbReference>
<dbReference type="Pfam" id="PF00232">
    <property type="entry name" value="Glyco_hydro_1"/>
    <property type="match status" value="1"/>
</dbReference>
<dbReference type="PRINTS" id="PR00131">
    <property type="entry name" value="GLHYDRLASE1"/>
</dbReference>
<dbReference type="SUPFAM" id="SSF51445">
    <property type="entry name" value="(Trans)glycosidases"/>
    <property type="match status" value="1"/>
</dbReference>
<dbReference type="PROSITE" id="PS00653">
    <property type="entry name" value="GLYCOSYL_HYDROL_F1_2"/>
    <property type="match status" value="1"/>
</dbReference>
<gene>
    <name evidence="4" type="primary">BGLU25</name>
    <name type="synonym">GLUC</name>
    <name evidence="6" type="ordered locus">At3g03640</name>
    <name evidence="7" type="ORF">T12J13.8</name>
</gene>
<evidence type="ECO:0000250" key="1">
    <source>
        <dbReference type="UniProtKB" id="Q7XSK0"/>
    </source>
</evidence>
<evidence type="ECO:0000250" key="2">
    <source>
        <dbReference type="UniProtKB" id="Q8L7J2"/>
    </source>
</evidence>
<evidence type="ECO:0000255" key="3"/>
<evidence type="ECO:0000303" key="4">
    <source>
    </source>
</evidence>
<evidence type="ECO:0000305" key="5"/>
<evidence type="ECO:0000312" key="6">
    <source>
        <dbReference type="Araport" id="AT3G03640"/>
    </source>
</evidence>
<evidence type="ECO:0000312" key="7">
    <source>
        <dbReference type="EMBL" id="AAF03468.1"/>
    </source>
</evidence>
<sequence length="531" mass="59807">MALKAILFLGLFLVVIVSPITVYGGAVCPASSTFGRGSFPDGFLFGATTSAFQHEGAAEEGGRGSSIWDSFTLKQHSESNNNLDGRLGVDFYHHYKEDVQLLKKLNMDAFRFSISWSRIFPHGKKDKGVSETGVKFYNDLINELIANGVTPLVTLFQWDVPQALEDEYGGFLSDRILEDFRDFAQFAFNKYGDRVKHWVTINEPYEFSRGGYETGEKAPGRCSKYVNEKCVAGKSGHEVYTVSHNLLLAHAEAVEEFRKCGKCTGGKIGIVQSPMWFEPYDKKSTSSPSEEIVKRAMDFTLGWHMEPITHGDYPQAMKDVVGSRLPSFTPEQKEKLKGSYDFVGINYFTSTFVAHTDNVNPEKPSWEADSRLQLHSNNVDGFKIGSQPATAKYPVCADGLRKVLKYIKENYNDPEIIVTGNGYKETLEEKDVLPDALSDSNRKYYHMRHLMALHGAVCEDKVNVKGYFVSSLMDGLEWEDGYKTRSGLYYVDYGHNMGRHEKQSAKWLSKLLEKVPDTIQSKVDSDSRKEL</sequence>
<accession>O82772</accession>
<protein>
    <recommendedName>
        <fullName evidence="4">Probable inactive beta-glucosidase 25</fullName>
        <shortName evidence="4">AtBGLU25</shortName>
    </recommendedName>
</protein>
<name>BGL25_ARATH</name>